<evidence type="ECO:0000250" key="1"/>
<evidence type="ECO:0000250" key="2">
    <source>
        <dbReference type="UniProtKB" id="P00636"/>
    </source>
</evidence>
<evidence type="ECO:0000250" key="3">
    <source>
        <dbReference type="UniProtKB" id="P09467"/>
    </source>
</evidence>
<evidence type="ECO:0000250" key="4">
    <source>
        <dbReference type="UniProtKB" id="Q9QXD6"/>
    </source>
</evidence>
<evidence type="ECO:0000269" key="5">
    <source>
    </source>
</evidence>
<evidence type="ECO:0000269" key="6">
    <source>
    </source>
</evidence>
<evidence type="ECO:0000269" key="7">
    <source>
    </source>
</evidence>
<evidence type="ECO:0000269" key="8">
    <source>
    </source>
</evidence>
<evidence type="ECO:0000305" key="9"/>
<evidence type="ECO:0007744" key="10">
    <source>
        <dbReference type="PDB" id="1BK4"/>
    </source>
</evidence>
<evidence type="ECO:0007829" key="11">
    <source>
        <dbReference type="PDB" id="1BK4"/>
    </source>
</evidence>
<feature type="initiator methionine" description="Removed" evidence="6 8">
    <location>
        <position position="1"/>
    </location>
</feature>
<feature type="chain" id="PRO_0000200501" description="Fructose-1,6-bisphosphatase 1">
    <location>
        <begin position="2"/>
        <end position="338"/>
    </location>
</feature>
<feature type="binding site" evidence="2">
    <location>
        <begin position="18"/>
        <end position="22"/>
    </location>
    <ligand>
        <name>AMP</name>
        <dbReference type="ChEBI" id="CHEBI:456215"/>
    </ligand>
</feature>
<feature type="binding site" evidence="2">
    <location>
        <begin position="28"/>
        <end position="32"/>
    </location>
    <ligand>
        <name>AMP</name>
        <dbReference type="ChEBI" id="CHEBI:456215"/>
    </ligand>
</feature>
<feature type="binding site" evidence="2">
    <location>
        <position position="69"/>
    </location>
    <ligand>
        <name>Mg(2+)</name>
        <dbReference type="ChEBI" id="CHEBI:18420"/>
        <label>1</label>
    </ligand>
</feature>
<feature type="binding site" evidence="2">
    <location>
        <position position="98"/>
    </location>
    <ligand>
        <name>Mg(2+)</name>
        <dbReference type="ChEBI" id="CHEBI:18420"/>
        <label>1</label>
    </ligand>
</feature>
<feature type="binding site" evidence="5 10">
    <location>
        <position position="98"/>
    </location>
    <ligand>
        <name>Mg(2+)</name>
        <dbReference type="ChEBI" id="CHEBI:18420"/>
        <label>2</label>
    </ligand>
</feature>
<feature type="binding site" evidence="2">
    <location>
        <begin position="113"/>
        <end position="114"/>
    </location>
    <ligand>
        <name>AMP</name>
        <dbReference type="ChEBI" id="CHEBI:456215"/>
    </ligand>
</feature>
<feature type="binding site">
    <location>
        <position position="119"/>
    </location>
    <ligand>
        <name>Mg(2+)</name>
        <dbReference type="ChEBI" id="CHEBI:18420"/>
        <label>2</label>
    </ligand>
</feature>
<feature type="binding site" evidence="5 10">
    <location>
        <position position="119"/>
    </location>
    <ligand>
        <name>Mg(2+)</name>
        <dbReference type="ChEBI" id="CHEBI:18420"/>
        <label>3</label>
    </ligand>
</feature>
<feature type="binding site" evidence="2">
    <location>
        <position position="121"/>
    </location>
    <ligand>
        <name>Mg(2+)</name>
        <dbReference type="ChEBI" id="CHEBI:18420"/>
        <label>2</label>
    </ligand>
</feature>
<feature type="binding site" evidence="2">
    <location>
        <begin position="122"/>
        <end position="125"/>
    </location>
    <ligand>
        <name>substrate</name>
    </ligand>
</feature>
<feature type="binding site" evidence="5 10">
    <location>
        <position position="122"/>
    </location>
    <ligand>
        <name>Mg(2+)</name>
        <dbReference type="ChEBI" id="CHEBI:18420"/>
        <label>3</label>
    </ligand>
</feature>
<feature type="binding site" evidence="2">
    <location>
        <position position="141"/>
    </location>
    <ligand>
        <name>AMP</name>
        <dbReference type="ChEBI" id="CHEBI:456215"/>
    </ligand>
</feature>
<feature type="binding site" evidence="2">
    <location>
        <begin position="213"/>
        <end position="216"/>
    </location>
    <ligand>
        <name>substrate</name>
    </ligand>
</feature>
<feature type="binding site" evidence="2">
    <location>
        <begin position="244"/>
        <end position="249"/>
    </location>
    <ligand>
        <name>substrate</name>
    </ligand>
</feature>
<feature type="binding site" evidence="2">
    <location>
        <position position="265"/>
    </location>
    <ligand>
        <name>substrate</name>
    </ligand>
</feature>
<feature type="binding site" evidence="2">
    <location>
        <begin position="275"/>
        <end position="277"/>
    </location>
    <ligand>
        <name>substrate</name>
    </ligand>
</feature>
<feature type="binding site" evidence="5 10">
    <location>
        <position position="281"/>
    </location>
    <ligand>
        <name>Mg(2+)</name>
        <dbReference type="ChEBI" id="CHEBI:18420"/>
        <label>3</label>
    </ligand>
</feature>
<feature type="modified residue" description="N-acetylalanine" evidence="6">
    <location>
        <position position="2"/>
    </location>
</feature>
<feature type="modified residue" description="N6-succinyllysine" evidence="4">
    <location>
        <position position="151"/>
    </location>
</feature>
<feature type="modified residue" description="Phosphotyrosine" evidence="4">
    <location>
        <position position="216"/>
    </location>
</feature>
<feature type="modified residue" description="Phosphotyrosine" evidence="4">
    <location>
        <position position="245"/>
    </location>
</feature>
<feature type="modified residue" description="Phosphotyrosine" evidence="3">
    <location>
        <position position="265"/>
    </location>
</feature>
<feature type="sequence conflict" description="In Ref. 5; AA sequence." evidence="9" ref="5">
    <original>N</original>
    <variation>D</variation>
    <location>
        <position position="84"/>
    </location>
</feature>
<feature type="sequence conflict" description="In Ref. 5; AA sequence." evidence="9" ref="5">
    <original>S</original>
    <variation>A</variation>
    <location>
        <position position="89"/>
    </location>
</feature>
<feature type="sequence conflict" description="In Ref. 5; AA sequence." evidence="9" ref="5">
    <original>C</original>
    <variation>S</variation>
    <location>
        <position position="93"/>
    </location>
</feature>
<feature type="sequence conflict" description="In Ref. 5; AA sequence." evidence="9" ref="5">
    <original>VC</original>
    <variation>SN</variation>
    <location>
        <begin position="116"/>
        <end position="117"/>
    </location>
</feature>
<feature type="sequence conflict" description="In Ref. 5; AA sequence." evidence="9" ref="5">
    <original>DG</original>
    <variation>VP</variation>
    <location>
        <begin position="122"/>
        <end position="123"/>
    </location>
</feature>
<feature type="sequence conflict" description="In Ref. 6; AA sequence." evidence="9" ref="6">
    <original>N</original>
    <variation>D</variation>
    <location>
        <position position="268"/>
    </location>
</feature>
<feature type="sequence conflict" description="In Ref. 6; AA sequence." evidence="9" ref="6">
    <original>E</original>
    <variation>Q</variation>
    <location>
        <position position="281"/>
    </location>
</feature>
<feature type="sequence conflict" description="In Ref. 6; AA sequence." evidence="9" ref="6">
    <location>
        <position position="284"/>
    </location>
</feature>
<feature type="sequence conflict" description="In Ref. 6; AA sequence." evidence="9" ref="6">
    <original>E</original>
    <variation>Q</variation>
    <location>
        <position position="301"/>
    </location>
</feature>
<feature type="sequence conflict" description="In Ref. 6; AA sequence." evidence="9" ref="6">
    <original>PTDIHQ</original>
    <variation>QTPDH</variation>
    <location>
        <begin position="308"/>
        <end position="313"/>
    </location>
</feature>
<feature type="sequence conflict" description="In Ref. 6; AA sequence." evidence="9" ref="6">
    <original>E</original>
    <variation>Q</variation>
    <location>
        <position position="327"/>
    </location>
</feature>
<feature type="sequence conflict" description="In Ref. 6; AA sequence." evidence="9" ref="6">
    <location>
        <begin position="330"/>
        <end position="331"/>
    </location>
</feature>
<feature type="helix" evidence="11">
    <location>
        <begin position="14"/>
        <end position="25"/>
    </location>
</feature>
<feature type="helix" evidence="11">
    <location>
        <begin position="30"/>
        <end position="49"/>
    </location>
</feature>
<feature type="turn" evidence="11">
    <location>
        <begin position="50"/>
        <end position="53"/>
    </location>
</feature>
<feature type="helix" evidence="11">
    <location>
        <begin position="74"/>
        <end position="88"/>
    </location>
</feature>
<feature type="strand" evidence="11">
    <location>
        <begin position="92"/>
        <end position="97"/>
    </location>
</feature>
<feature type="helix" evidence="11">
    <location>
        <begin position="108"/>
        <end position="110"/>
    </location>
</feature>
<feature type="strand" evidence="11">
    <location>
        <begin position="111"/>
        <end position="122"/>
    </location>
</feature>
<feature type="helix" evidence="11">
    <location>
        <begin position="126"/>
        <end position="129"/>
    </location>
</feature>
<feature type="strand" evidence="11">
    <location>
        <begin position="133"/>
        <end position="141"/>
    </location>
</feature>
<feature type="helix" evidence="11">
    <location>
        <begin position="150"/>
        <end position="153"/>
    </location>
</feature>
<feature type="helix" evidence="11">
    <location>
        <begin position="157"/>
        <end position="159"/>
    </location>
</feature>
<feature type="strand" evidence="11">
    <location>
        <begin position="161"/>
        <end position="178"/>
    </location>
</feature>
<feature type="strand" evidence="11">
    <location>
        <begin position="181"/>
        <end position="188"/>
    </location>
</feature>
<feature type="turn" evidence="11">
    <location>
        <begin position="189"/>
        <end position="192"/>
    </location>
</feature>
<feature type="strand" evidence="11">
    <location>
        <begin position="193"/>
        <end position="198"/>
    </location>
</feature>
<feature type="strand" evidence="11">
    <location>
        <begin position="208"/>
        <end position="211"/>
    </location>
</feature>
<feature type="helix" evidence="11">
    <location>
        <begin position="214"/>
        <end position="219"/>
    </location>
</feature>
<feature type="helix" evidence="11">
    <location>
        <begin position="222"/>
        <end position="232"/>
    </location>
</feature>
<feature type="helix" evidence="11">
    <location>
        <begin position="249"/>
        <end position="259"/>
    </location>
</feature>
<feature type="strand" evidence="11">
    <location>
        <begin position="262"/>
        <end position="265"/>
    </location>
</feature>
<feature type="strand" evidence="11">
    <location>
        <begin position="275"/>
        <end position="277"/>
    </location>
</feature>
<feature type="turn" evidence="11">
    <location>
        <begin position="278"/>
        <end position="281"/>
    </location>
</feature>
<feature type="helix" evidence="11">
    <location>
        <begin position="282"/>
        <end position="292"/>
    </location>
</feature>
<feature type="strand" evidence="11">
    <location>
        <begin position="295"/>
        <end position="297"/>
    </location>
</feature>
<feature type="strand" evidence="11">
    <location>
        <begin position="299"/>
        <end position="302"/>
    </location>
</feature>
<feature type="helix" evidence="11">
    <location>
        <begin position="303"/>
        <end position="305"/>
    </location>
</feature>
<feature type="strand" evidence="11">
    <location>
        <begin position="317"/>
        <end position="320"/>
    </location>
</feature>
<feature type="helix" evidence="11">
    <location>
        <begin position="322"/>
        <end position="333"/>
    </location>
</feature>
<feature type="turn" evidence="11">
    <location>
        <begin position="334"/>
        <end position="336"/>
    </location>
</feature>
<proteinExistence type="evidence at protein level"/>
<keyword id="KW-0002">3D-structure</keyword>
<keyword id="KW-0007">Acetylation</keyword>
<keyword id="KW-0021">Allosteric enzyme</keyword>
<keyword id="KW-0119">Carbohydrate metabolism</keyword>
<keyword id="KW-0903">Direct protein sequencing</keyword>
<keyword id="KW-0312">Gluconeogenesis</keyword>
<keyword id="KW-0378">Hydrolase</keyword>
<keyword id="KW-0460">Magnesium</keyword>
<keyword id="KW-0479">Metal-binding</keyword>
<keyword id="KW-0597">Phosphoprotein</keyword>
<keyword id="KW-1185">Reference proteome</keyword>
<organism>
    <name type="scientific">Oryctolagus cuniculus</name>
    <name type="common">Rabbit</name>
    <dbReference type="NCBI Taxonomy" id="9986"/>
    <lineage>
        <taxon>Eukaryota</taxon>
        <taxon>Metazoa</taxon>
        <taxon>Chordata</taxon>
        <taxon>Craniata</taxon>
        <taxon>Vertebrata</taxon>
        <taxon>Euteleostomi</taxon>
        <taxon>Mammalia</taxon>
        <taxon>Eutheria</taxon>
        <taxon>Euarchontoglires</taxon>
        <taxon>Glires</taxon>
        <taxon>Lagomorpha</taxon>
        <taxon>Leporidae</taxon>
        <taxon>Oryctolagus</taxon>
    </lineage>
</organism>
<comment type="function">
    <text evidence="3">Catalyzes the hydrolysis of fructose 1,6-bisphosphate to fructose 6-phosphate in the presence of divalent cations, acting as a rate-limiting enzyme in gluconeogenesis. Plays a role in regulating glucose sensing and insulin secretion of pancreatic beta-cells. Appears to modulate glycerol gluconeogenesis in liver. Important regulator of appetite and adiposity; increased expression of the protein in liver after nutrient excess increases circulating satiety hormones and reduces appetite-stimulating neuropeptides and thus seems to provide a feedback mechanism to limit weight gain.</text>
</comment>
<comment type="catalytic activity">
    <reaction evidence="7">
        <text>beta-D-fructose 1,6-bisphosphate + H2O = beta-D-fructose 6-phosphate + phosphate</text>
        <dbReference type="Rhea" id="RHEA:11064"/>
        <dbReference type="ChEBI" id="CHEBI:15377"/>
        <dbReference type="ChEBI" id="CHEBI:32966"/>
        <dbReference type="ChEBI" id="CHEBI:43474"/>
        <dbReference type="ChEBI" id="CHEBI:57634"/>
        <dbReference type="EC" id="3.1.3.11"/>
    </reaction>
</comment>
<comment type="cofactor">
    <cofactor evidence="2">
        <name>Mg(2+)</name>
        <dbReference type="ChEBI" id="CHEBI:18420"/>
    </cofactor>
    <text evidence="2">Binds 3 Mg(2+) ions per subunit.</text>
</comment>
<comment type="activity regulation">
    <text evidence="1">Subject to complex allosteric regulation. The enzyme can assume an active R-state, or an inactive T-state. Intermediate conformations may exist. AMP acts as an allosteric inhibitor. AMP binding affects the turnover of bound substrate and not the affinity for substrate. Fructose 2,6-bisphosphate acts as a competitive inhibitor. Fructose 2,6-bisphosphate and AMP have synergistic effects (By similarity).</text>
</comment>
<comment type="pathway">
    <text>Carbohydrate biosynthesis; gluconeogenesis.</text>
</comment>
<comment type="subunit">
    <text evidence="7">Homotetramer.</text>
</comment>
<comment type="similarity">
    <text evidence="9">Belongs to the FBPase class 1 family.</text>
</comment>
<sequence length="338" mass="36578">MADKAPFDTDISTMTRFVMEEGRKAGGTGEMTQLLNSLCTAVKAISTAVRKAGIAHLYGIAGSTNVTGDQVKKLDVLSNDLVMNMLKSSFATCVLVSEEDKNAIIVEPEKRGKYVVCFDPLDGSSNIDCLVSIGTIFGIYRKKSTDEPSTKDALQPGRNLVAAGYALYGSATMLVLAGGSGVNSFMLDPAIGEFILVDKNVKIKKKGNIYSLNEGYAKDFDPAVTEYIQKKKFPPDNSSPYGARYVGSMVADVHRTLVYGGIFLYPANKKSPDGKLRLLYECNPMAFIMEKAGGMATTGKEAILDIVPTDIHQRAPVILGSPDDVQEFLEIYKKHAVK</sequence>
<protein>
    <recommendedName>
        <fullName>Fructose-1,6-bisphosphatase 1</fullName>
        <shortName>FBPase 1</shortName>
        <ecNumber evidence="7">3.1.3.11</ecNumber>
    </recommendedName>
    <alternativeName>
        <fullName>D-fructose-1,6-bisphosphate 1-phosphohydrolase 1</fullName>
    </alternativeName>
    <alternativeName>
        <fullName>Liver FBPase</fullName>
    </alternativeName>
</protein>
<accession>P00637</accession>
<dbReference type="EC" id="3.1.3.11" evidence="7"/>
<dbReference type="PIR" id="S70469">
    <property type="entry name" value="S70469"/>
</dbReference>
<dbReference type="PDB" id="1BK4">
    <property type="method" value="X-ray"/>
    <property type="resolution" value="2.30 A"/>
    <property type="chains" value="A=2-338"/>
</dbReference>
<dbReference type="PDBsum" id="1BK4"/>
<dbReference type="SMR" id="P00637"/>
<dbReference type="FunCoup" id="P00637">
    <property type="interactions" value="579"/>
</dbReference>
<dbReference type="STRING" id="9986.ENSOCUP00000046019"/>
<dbReference type="iPTMnet" id="P00637"/>
<dbReference type="PaxDb" id="9986-ENSOCUP00000016277"/>
<dbReference type="eggNOG" id="KOG1458">
    <property type="taxonomic scope" value="Eukaryota"/>
</dbReference>
<dbReference type="InParanoid" id="P00637"/>
<dbReference type="SABIO-RK" id="P00637"/>
<dbReference type="UniPathway" id="UPA00138"/>
<dbReference type="EvolutionaryTrace" id="P00637"/>
<dbReference type="Proteomes" id="UP000001811">
    <property type="component" value="Unplaced"/>
</dbReference>
<dbReference type="GO" id="GO:0005737">
    <property type="term" value="C:cytoplasm"/>
    <property type="evidence" value="ECO:0000250"/>
    <property type="project" value="UniProtKB"/>
</dbReference>
<dbReference type="GO" id="GO:0005829">
    <property type="term" value="C:cytosol"/>
    <property type="evidence" value="ECO:0007669"/>
    <property type="project" value="TreeGrafter"/>
</dbReference>
<dbReference type="GO" id="GO:0016208">
    <property type="term" value="F:AMP binding"/>
    <property type="evidence" value="ECO:0000250"/>
    <property type="project" value="UniProtKB"/>
</dbReference>
<dbReference type="GO" id="GO:0042132">
    <property type="term" value="F:fructose 1,6-bisphosphate 1-phosphatase activity"/>
    <property type="evidence" value="ECO:0000314"/>
    <property type="project" value="UniProtKB"/>
</dbReference>
<dbReference type="GO" id="GO:0042802">
    <property type="term" value="F:identical protein binding"/>
    <property type="evidence" value="ECO:0000250"/>
    <property type="project" value="UniProtKB"/>
</dbReference>
<dbReference type="GO" id="GO:0046872">
    <property type="term" value="F:metal ion binding"/>
    <property type="evidence" value="ECO:0000250"/>
    <property type="project" value="UniProtKB"/>
</dbReference>
<dbReference type="GO" id="GO:0048029">
    <property type="term" value="F:monosaccharide binding"/>
    <property type="evidence" value="ECO:0000250"/>
    <property type="project" value="UniProtKB"/>
</dbReference>
<dbReference type="GO" id="GO:0071286">
    <property type="term" value="P:cellular response to magnesium ion"/>
    <property type="evidence" value="ECO:0000250"/>
    <property type="project" value="UniProtKB"/>
</dbReference>
<dbReference type="GO" id="GO:0071466">
    <property type="term" value="P:cellular response to xenobiotic stimulus"/>
    <property type="evidence" value="ECO:0000250"/>
    <property type="project" value="UniProtKB"/>
</dbReference>
<dbReference type="GO" id="GO:0030388">
    <property type="term" value="P:fructose 1,6-bisphosphate metabolic process"/>
    <property type="evidence" value="ECO:0007669"/>
    <property type="project" value="TreeGrafter"/>
</dbReference>
<dbReference type="GO" id="GO:0006002">
    <property type="term" value="P:fructose 6-phosphate metabolic process"/>
    <property type="evidence" value="ECO:0000314"/>
    <property type="project" value="UniProtKB"/>
</dbReference>
<dbReference type="GO" id="GO:0006000">
    <property type="term" value="P:fructose metabolic process"/>
    <property type="evidence" value="ECO:0007669"/>
    <property type="project" value="TreeGrafter"/>
</dbReference>
<dbReference type="GO" id="GO:0006094">
    <property type="term" value="P:gluconeogenesis"/>
    <property type="evidence" value="ECO:0000250"/>
    <property type="project" value="UniProtKB"/>
</dbReference>
<dbReference type="GO" id="GO:0030308">
    <property type="term" value="P:negative regulation of cell growth"/>
    <property type="evidence" value="ECO:0000250"/>
    <property type="project" value="UniProtKB"/>
</dbReference>
<dbReference type="GO" id="GO:0045820">
    <property type="term" value="P:negative regulation of glycolytic process"/>
    <property type="evidence" value="ECO:0000250"/>
    <property type="project" value="UniProtKB"/>
</dbReference>
<dbReference type="GO" id="GO:0046580">
    <property type="term" value="P:negative regulation of Ras protein signal transduction"/>
    <property type="evidence" value="ECO:0000250"/>
    <property type="project" value="UniProtKB"/>
</dbReference>
<dbReference type="GO" id="GO:0006111">
    <property type="term" value="P:regulation of gluconeogenesis"/>
    <property type="evidence" value="ECO:0000250"/>
    <property type="project" value="UniProtKB"/>
</dbReference>
<dbReference type="GO" id="GO:0005986">
    <property type="term" value="P:sucrose biosynthetic process"/>
    <property type="evidence" value="ECO:0007669"/>
    <property type="project" value="TreeGrafter"/>
</dbReference>
<dbReference type="CDD" id="cd00354">
    <property type="entry name" value="FBPase"/>
    <property type="match status" value="1"/>
</dbReference>
<dbReference type="FunFam" id="3.30.540.10:FF:000037">
    <property type="entry name" value="Fructose-1,6-bisphosphatase 1"/>
    <property type="match status" value="1"/>
</dbReference>
<dbReference type="FunFam" id="3.40.190.80:FF:000001">
    <property type="entry name" value="Fructose-1,6-bisphosphatase class 1"/>
    <property type="match status" value="1"/>
</dbReference>
<dbReference type="Gene3D" id="3.40.190.80">
    <property type="match status" value="1"/>
</dbReference>
<dbReference type="Gene3D" id="3.30.540.10">
    <property type="entry name" value="Fructose-1,6-Bisphosphatase, subunit A, domain 1"/>
    <property type="match status" value="1"/>
</dbReference>
<dbReference type="HAMAP" id="MF_01855">
    <property type="entry name" value="FBPase_class1"/>
    <property type="match status" value="1"/>
</dbReference>
<dbReference type="InterPro" id="IPR044015">
    <property type="entry name" value="FBPase_C_dom"/>
</dbReference>
<dbReference type="InterPro" id="IPR000146">
    <property type="entry name" value="FBPase_class-1"/>
</dbReference>
<dbReference type="InterPro" id="IPR033391">
    <property type="entry name" value="FBPase_N"/>
</dbReference>
<dbReference type="InterPro" id="IPR028343">
    <property type="entry name" value="FBPtase"/>
</dbReference>
<dbReference type="InterPro" id="IPR020548">
    <property type="entry name" value="Fructose_bisphosphatase_AS"/>
</dbReference>
<dbReference type="NCBIfam" id="NF006778">
    <property type="entry name" value="PRK09293.1-1"/>
    <property type="match status" value="1"/>
</dbReference>
<dbReference type="PANTHER" id="PTHR11556:SF11">
    <property type="entry name" value="FRUCTOSE-1,6-BISPHOSPHATASE 1"/>
    <property type="match status" value="1"/>
</dbReference>
<dbReference type="PANTHER" id="PTHR11556">
    <property type="entry name" value="FRUCTOSE-1,6-BISPHOSPHATASE-RELATED"/>
    <property type="match status" value="1"/>
</dbReference>
<dbReference type="Pfam" id="PF00316">
    <property type="entry name" value="FBPase"/>
    <property type="match status" value="1"/>
</dbReference>
<dbReference type="Pfam" id="PF18913">
    <property type="entry name" value="FBPase_C"/>
    <property type="match status" value="1"/>
</dbReference>
<dbReference type="PIRSF" id="PIRSF500210">
    <property type="entry name" value="FBPtase"/>
    <property type="match status" value="1"/>
</dbReference>
<dbReference type="PIRSF" id="PIRSF000904">
    <property type="entry name" value="FBPtase_SBPase"/>
    <property type="match status" value="1"/>
</dbReference>
<dbReference type="PRINTS" id="PR00115">
    <property type="entry name" value="F16BPHPHTASE"/>
</dbReference>
<dbReference type="SUPFAM" id="SSF56655">
    <property type="entry name" value="Carbohydrate phosphatase"/>
    <property type="match status" value="1"/>
</dbReference>
<dbReference type="PROSITE" id="PS00124">
    <property type="entry name" value="FBPASE"/>
    <property type="match status" value="1"/>
</dbReference>
<reference key="1">
    <citation type="journal article" date="1996" name="FEBS Lett.">
        <title>Fructose-1,6-bisphosphatase. Primary structure of the rabbit liver enzyme. 'Intermediate' variability of an oligomeric protein.</title>
        <authorList>
            <person name="Kaiser R."/>
            <person name="Olsson H."/>
            <person name="Erman M."/>
            <person name="Weeks C.M."/>
            <person name="Hjelmqvist L."/>
            <person name="Ghosh D."/>
            <person name="Joernvall H."/>
        </authorList>
    </citation>
    <scope>PROTEIN SEQUENCE OF 2-338</scope>
    <source>
        <tissue>Liver</tissue>
    </source>
</reference>
<reference key="2">
    <citation type="journal article" date="1977" name="Arch. Biochem. Biophys.">
        <title>Rabbit liver fructose 1,6-bisphosphatase: the sequence of the amino-terminal region.</title>
        <authorList>
            <person name="El-Dorry H.A."/>
            <person name="Chu D.K."/>
            <person name="Dzugaj A."/>
            <person name="Tsolas O."/>
            <person name="Pontremoli S."/>
            <person name="Horecker B.L."/>
        </authorList>
    </citation>
    <scope>PROTEIN SEQUENCE OF 2-19</scope>
    <scope>ACETYLATION AT ALA-2</scope>
    <source>
        <strain>New Zealand white</strain>
        <tissue>Liver</tissue>
    </source>
</reference>
<reference key="3">
    <citation type="journal article" date="1977" name="Arch. Biochem. Biophys.">
        <title>Primary structure of the S-peptide formed by digestion of rabbit liver fructose 1,6-biphosphatase with subtilisin.</title>
        <authorList>
            <person name="El-Dorry H.A."/>
            <person name="Chu D.K."/>
            <person name="Dzugaj A."/>
            <person name="Botelho L.H."/>
            <person name="Pontremoli S."/>
            <person name="Horecker B.L."/>
        </authorList>
    </citation>
    <scope>PROTEIN SEQUENCE OF 17-61</scope>
    <source>
        <strain>New Zealand white</strain>
        <tissue>Liver</tissue>
    </source>
</reference>
<reference key="4">
    <citation type="journal article" date="1977" name="Arch. Biochem. Biophys.">
        <title>Digestion of rabbit liver fructose 1,6-bisphosphatase with subtilisin: sites of cleavage and activity of the modified enzyme.</title>
        <authorList>
            <person name="Botelho L.H."/>
            <person name="El-Dorry H.A."/>
            <person name="Crivellaro O."/>
            <person name="Chu D.K."/>
            <person name="Pontremoli S."/>
            <person name="Horecker B.L."/>
        </authorList>
    </citation>
    <scope>PROTEIN SEQUENCE OF 20-78</scope>
    <scope>SUBUNIT</scope>
    <scope>CATALYTIC ACTIVITY</scope>
    <source>
        <strain>New Zealand white</strain>
        <tissue>Liver</tissue>
    </source>
</reference>
<reference key="5">
    <citation type="journal article" date="1982" name="Arch. Biochem. Biophys.">
        <title>Location of lysyl residues at the allosteric site of fructose 1,6-bisphosphatase.</title>
        <authorList>
            <person name="Suda H."/>
            <person name="Xu G.-J."/>
            <person name="Kutny R.M."/>
            <person name="Natalini P."/>
            <person name="Pontremoli S."/>
            <person name="Horecker B.L."/>
        </authorList>
    </citation>
    <scope>PRELIMINARY PROTEIN SEQUENCE OF 84-123 AND 136-155</scope>
    <scope>ALLOSTERIC REGULATION</scope>
    <source>
        <tissue>Liver</tissue>
    </source>
</reference>
<reference key="6">
    <citation type="journal article" date="1982" name="Arch. Biochem. Biophys.">
        <title>Rabbit liver fructose-1,6-bisphosphatase: location of an active site lysyl residue in the COOH-terminal fragment generated by a lysosomal proteinase.</title>
        <authorList>
            <person name="Xu G.J."/>
            <person name="Natalini P."/>
            <person name="Suda H."/>
            <person name="Tsolas O."/>
            <person name="Dzugaj A."/>
            <person name="Sun S.C."/>
            <person name="Pontremoli S."/>
            <person name="Horecker B.L."/>
        </authorList>
    </citation>
    <scope>PROTEIN SEQUENCE OF 249-289 AND 296-338</scope>
    <source>
        <tissue>Liver</tissue>
    </source>
</reference>
<reference key="7">
    <citation type="journal article" date="1999" name="Acta Crystallogr. D">
        <title>Structure of rabbit liver fructose 1,6-bisphosphatase at 2.3 A resolution.</title>
        <authorList>
            <person name="Weeks C.M."/>
            <person name="Roszak A.W."/>
            <person name="Erman M."/>
            <person name="Kaiser R."/>
            <person name="Joernvall H."/>
            <person name="Ghosh D."/>
        </authorList>
    </citation>
    <scope>X-RAY CRYSTALLOGRAPHY (2.3 ANGSTROMS) IN COMPLEX WITH MAGNESIUM IONS</scope>
</reference>
<name>F16P1_RABIT</name>
<gene>
    <name type="primary">FBP1</name>
    <name type="synonym">FBP</name>
</gene>